<evidence type="ECO:0000255" key="1">
    <source>
        <dbReference type="HAMAP-Rule" id="MF_00385"/>
    </source>
</evidence>
<evidence type="ECO:0000305" key="2"/>
<sequence length="82" mass="9338">MAVKMRLKRMGAKKAPFYRVVVADSRSPRDGRFVEEIGYYNPITEPSTIKLDEEKVQKWIKNGAQPTDTVKKLIEKAGISVK</sequence>
<feature type="chain" id="PRO_1000049241" description="Small ribosomal subunit protein bS16">
    <location>
        <begin position="1"/>
        <end position="82"/>
    </location>
</feature>
<gene>
    <name evidence="1" type="primary">rpsP</name>
    <name type="ordered locus">CLB_2312</name>
</gene>
<accession>A7FW12</accession>
<dbReference type="EMBL" id="CP000726">
    <property type="protein sequence ID" value="ABS34418.1"/>
    <property type="molecule type" value="Genomic_DNA"/>
</dbReference>
<dbReference type="RefSeq" id="WP_003362590.1">
    <property type="nucleotide sequence ID" value="NC_009697.1"/>
</dbReference>
<dbReference type="SMR" id="A7FW12"/>
<dbReference type="KEGG" id="cba:CLB_2312"/>
<dbReference type="HOGENOM" id="CLU_100590_5_0_9"/>
<dbReference type="GO" id="GO:0005737">
    <property type="term" value="C:cytoplasm"/>
    <property type="evidence" value="ECO:0007669"/>
    <property type="project" value="UniProtKB-ARBA"/>
</dbReference>
<dbReference type="GO" id="GO:0015935">
    <property type="term" value="C:small ribosomal subunit"/>
    <property type="evidence" value="ECO:0007669"/>
    <property type="project" value="TreeGrafter"/>
</dbReference>
<dbReference type="GO" id="GO:0003735">
    <property type="term" value="F:structural constituent of ribosome"/>
    <property type="evidence" value="ECO:0007669"/>
    <property type="project" value="InterPro"/>
</dbReference>
<dbReference type="GO" id="GO:0006412">
    <property type="term" value="P:translation"/>
    <property type="evidence" value="ECO:0007669"/>
    <property type="project" value="UniProtKB-UniRule"/>
</dbReference>
<dbReference type="FunFam" id="3.30.1320.10:FF:000002">
    <property type="entry name" value="30S ribosomal protein S16"/>
    <property type="match status" value="1"/>
</dbReference>
<dbReference type="Gene3D" id="3.30.1320.10">
    <property type="match status" value="1"/>
</dbReference>
<dbReference type="HAMAP" id="MF_00385">
    <property type="entry name" value="Ribosomal_bS16"/>
    <property type="match status" value="1"/>
</dbReference>
<dbReference type="InterPro" id="IPR000307">
    <property type="entry name" value="Ribosomal_bS16"/>
</dbReference>
<dbReference type="InterPro" id="IPR020592">
    <property type="entry name" value="Ribosomal_bS16_CS"/>
</dbReference>
<dbReference type="InterPro" id="IPR023803">
    <property type="entry name" value="Ribosomal_bS16_dom_sf"/>
</dbReference>
<dbReference type="NCBIfam" id="TIGR00002">
    <property type="entry name" value="S16"/>
    <property type="match status" value="1"/>
</dbReference>
<dbReference type="PANTHER" id="PTHR12919">
    <property type="entry name" value="30S RIBOSOMAL PROTEIN S16"/>
    <property type="match status" value="1"/>
</dbReference>
<dbReference type="PANTHER" id="PTHR12919:SF20">
    <property type="entry name" value="SMALL RIBOSOMAL SUBUNIT PROTEIN BS16M"/>
    <property type="match status" value="1"/>
</dbReference>
<dbReference type="Pfam" id="PF00886">
    <property type="entry name" value="Ribosomal_S16"/>
    <property type="match status" value="1"/>
</dbReference>
<dbReference type="SUPFAM" id="SSF54565">
    <property type="entry name" value="Ribosomal protein S16"/>
    <property type="match status" value="1"/>
</dbReference>
<dbReference type="PROSITE" id="PS00732">
    <property type="entry name" value="RIBOSOMAL_S16"/>
    <property type="match status" value="1"/>
</dbReference>
<organism>
    <name type="scientific">Clostridium botulinum (strain ATCC 19397 / Type A)</name>
    <dbReference type="NCBI Taxonomy" id="441770"/>
    <lineage>
        <taxon>Bacteria</taxon>
        <taxon>Bacillati</taxon>
        <taxon>Bacillota</taxon>
        <taxon>Clostridia</taxon>
        <taxon>Eubacteriales</taxon>
        <taxon>Clostridiaceae</taxon>
        <taxon>Clostridium</taxon>
    </lineage>
</organism>
<name>RS16_CLOB1</name>
<proteinExistence type="inferred from homology"/>
<keyword id="KW-0687">Ribonucleoprotein</keyword>
<keyword id="KW-0689">Ribosomal protein</keyword>
<reference key="1">
    <citation type="journal article" date="2007" name="PLoS ONE">
        <title>Analysis of the neurotoxin complex genes in Clostridium botulinum A1-A4 and B1 strains: BoNT/A3, /Ba4 and /B1 clusters are located within plasmids.</title>
        <authorList>
            <person name="Smith T.J."/>
            <person name="Hill K.K."/>
            <person name="Foley B.T."/>
            <person name="Detter J.C."/>
            <person name="Munk A.C."/>
            <person name="Bruce D.C."/>
            <person name="Doggett N.A."/>
            <person name="Smith L.A."/>
            <person name="Marks J.D."/>
            <person name="Xie G."/>
            <person name="Brettin T.S."/>
        </authorList>
    </citation>
    <scope>NUCLEOTIDE SEQUENCE [LARGE SCALE GENOMIC DNA]</scope>
    <source>
        <strain>ATCC 19397 / Type A</strain>
    </source>
</reference>
<protein>
    <recommendedName>
        <fullName evidence="1">Small ribosomal subunit protein bS16</fullName>
    </recommendedName>
    <alternativeName>
        <fullName evidence="2">30S ribosomal protein S16</fullName>
    </alternativeName>
</protein>
<comment type="similarity">
    <text evidence="1">Belongs to the bacterial ribosomal protein bS16 family.</text>
</comment>